<dbReference type="EC" id="4.2.1.75" evidence="5"/>
<dbReference type="EMBL" id="X04694">
    <property type="protein sequence ID" value="CAA28399.1"/>
    <property type="molecule type" value="Genomic_DNA"/>
</dbReference>
<dbReference type="EMBL" id="X89633">
    <property type="protein sequence ID" value="CAA61783.1"/>
    <property type="molecule type" value="Genomic_DNA"/>
</dbReference>
<dbReference type="EMBL" id="Z75186">
    <property type="protein sequence ID" value="CAA99504.1"/>
    <property type="molecule type" value="Genomic_DNA"/>
</dbReference>
<dbReference type="EMBL" id="BK006948">
    <property type="protein sequence ID" value="DAA11043.1"/>
    <property type="molecule type" value="Genomic_DNA"/>
</dbReference>
<dbReference type="PIR" id="S67180">
    <property type="entry name" value="RGBY7K"/>
</dbReference>
<dbReference type="RefSeq" id="NP_014921.1">
    <property type="nucleotide sequence ID" value="NM_001183697.1"/>
</dbReference>
<dbReference type="SMR" id="P06174"/>
<dbReference type="BioGRID" id="34666">
    <property type="interactions" value="113"/>
</dbReference>
<dbReference type="FunCoup" id="P06174">
    <property type="interactions" value="178"/>
</dbReference>
<dbReference type="IntAct" id="P06174">
    <property type="interactions" value="2"/>
</dbReference>
<dbReference type="STRING" id="4932.YOR278W"/>
<dbReference type="GlyGen" id="P06174">
    <property type="glycosylation" value="1 site"/>
</dbReference>
<dbReference type="PaxDb" id="4932-YOR278W"/>
<dbReference type="PeptideAtlas" id="P06174"/>
<dbReference type="EnsemblFungi" id="YOR278W_mRNA">
    <property type="protein sequence ID" value="YOR278W"/>
    <property type="gene ID" value="YOR278W"/>
</dbReference>
<dbReference type="GeneID" id="854452"/>
<dbReference type="KEGG" id="sce:YOR278W"/>
<dbReference type="AGR" id="SGD:S000005804"/>
<dbReference type="SGD" id="S000005804">
    <property type="gene designation" value="HEM4"/>
</dbReference>
<dbReference type="VEuPathDB" id="FungiDB:YOR278W"/>
<dbReference type="eggNOG" id="KOG4132">
    <property type="taxonomic scope" value="Eukaryota"/>
</dbReference>
<dbReference type="GeneTree" id="ENSGT00390000009853"/>
<dbReference type="HOGENOM" id="CLU_051874_0_1_1"/>
<dbReference type="InParanoid" id="P06174"/>
<dbReference type="OMA" id="IHGADTG"/>
<dbReference type="OrthoDB" id="5595751at2759"/>
<dbReference type="BioCyc" id="YEAST:YOR278W-MONOMER"/>
<dbReference type="Reactome" id="R-SCE-189451">
    <property type="pathway name" value="Heme biosynthesis"/>
</dbReference>
<dbReference type="UniPathway" id="UPA00251">
    <property type="reaction ID" value="UER00320"/>
</dbReference>
<dbReference type="BioGRID-ORCS" id="854452">
    <property type="hits" value="0 hits in 10 CRISPR screens"/>
</dbReference>
<dbReference type="PRO" id="PR:P06174"/>
<dbReference type="Proteomes" id="UP000002311">
    <property type="component" value="Chromosome XV"/>
</dbReference>
<dbReference type="RNAct" id="P06174">
    <property type="molecule type" value="protein"/>
</dbReference>
<dbReference type="GO" id="GO:0005829">
    <property type="term" value="C:cytosol"/>
    <property type="evidence" value="ECO:0000318"/>
    <property type="project" value="GO_Central"/>
</dbReference>
<dbReference type="GO" id="GO:0004852">
    <property type="term" value="F:uroporphyrinogen-III synthase activity"/>
    <property type="evidence" value="ECO:0000315"/>
    <property type="project" value="SGD"/>
</dbReference>
<dbReference type="GO" id="GO:0006783">
    <property type="term" value="P:heme biosynthetic process"/>
    <property type="evidence" value="ECO:0000315"/>
    <property type="project" value="SGD"/>
</dbReference>
<dbReference type="GO" id="GO:0006782">
    <property type="term" value="P:protoporphyrinogen IX biosynthetic process"/>
    <property type="evidence" value="ECO:0007669"/>
    <property type="project" value="UniProtKB-UniPathway"/>
</dbReference>
<dbReference type="GO" id="GO:0006780">
    <property type="term" value="P:uroporphyrinogen III biosynthetic process"/>
    <property type="evidence" value="ECO:0000318"/>
    <property type="project" value="GO_Central"/>
</dbReference>
<dbReference type="CDD" id="cd06578">
    <property type="entry name" value="HemD"/>
    <property type="match status" value="1"/>
</dbReference>
<dbReference type="FunFam" id="3.40.50.10090:FF:000010">
    <property type="entry name" value="Uroporphyrinogen-III synthase"/>
    <property type="match status" value="1"/>
</dbReference>
<dbReference type="Gene3D" id="3.40.50.10090">
    <property type="match status" value="2"/>
</dbReference>
<dbReference type="InterPro" id="IPR036108">
    <property type="entry name" value="4pyrrol_syn_uPrphyn_synt_sf"/>
</dbReference>
<dbReference type="InterPro" id="IPR003754">
    <property type="entry name" value="4pyrrol_synth_uPrphyn_synth"/>
</dbReference>
<dbReference type="InterPro" id="IPR039793">
    <property type="entry name" value="UROS/Hem4"/>
</dbReference>
<dbReference type="PANTHER" id="PTHR12390">
    <property type="entry name" value="UROPORPHYRINOGEN III SYNTHASE"/>
    <property type="match status" value="1"/>
</dbReference>
<dbReference type="PANTHER" id="PTHR12390:SF0">
    <property type="entry name" value="UROPORPHYRINOGEN-III SYNTHASE"/>
    <property type="match status" value="1"/>
</dbReference>
<dbReference type="Pfam" id="PF02602">
    <property type="entry name" value="HEM4"/>
    <property type="match status" value="1"/>
</dbReference>
<dbReference type="SUPFAM" id="SSF69618">
    <property type="entry name" value="HemD-like"/>
    <property type="match status" value="1"/>
</dbReference>
<keyword id="KW-0350">Heme biosynthesis</keyword>
<keyword id="KW-0456">Lyase</keyword>
<keyword id="KW-0627">Porphyrin biosynthesis</keyword>
<keyword id="KW-1185">Reference proteome</keyword>
<name>HEM4_YEAST</name>
<accession>P06174</accession>
<accession>D6W2X7</accession>
<proteinExistence type="evidence at protein level"/>
<organism>
    <name type="scientific">Saccharomyces cerevisiae (strain ATCC 204508 / S288c)</name>
    <name type="common">Baker's yeast</name>
    <dbReference type="NCBI Taxonomy" id="559292"/>
    <lineage>
        <taxon>Eukaryota</taxon>
        <taxon>Fungi</taxon>
        <taxon>Dikarya</taxon>
        <taxon>Ascomycota</taxon>
        <taxon>Saccharomycotina</taxon>
        <taxon>Saccharomycetes</taxon>
        <taxon>Saccharomycetales</taxon>
        <taxon>Saccharomycetaceae</taxon>
        <taxon>Saccharomyces</taxon>
    </lineage>
</organism>
<comment type="function">
    <text evidence="5">Catalyzes cyclization of the linear tetrapyrrole, hydroxymethylbilane, to the macrocyclic uroporphyrinogen III, the fourth step in the heme biosynthetic pathway.</text>
</comment>
<comment type="catalytic activity">
    <reaction evidence="5">
        <text>hydroxymethylbilane = uroporphyrinogen III + H2O</text>
        <dbReference type="Rhea" id="RHEA:18965"/>
        <dbReference type="ChEBI" id="CHEBI:15377"/>
        <dbReference type="ChEBI" id="CHEBI:57308"/>
        <dbReference type="ChEBI" id="CHEBI:57845"/>
        <dbReference type="EC" id="4.2.1.75"/>
    </reaction>
    <physiologicalReaction direction="left-to-right" evidence="5">
        <dbReference type="Rhea" id="RHEA:18966"/>
    </physiologicalReaction>
</comment>
<comment type="pathway">
    <text evidence="5">Porphyrin-containing compound metabolism; protoporphyrin-IX biosynthesis; coproporphyrinogen-III from 5-aminolevulinate: step 3/4.</text>
</comment>
<comment type="miscellaneous">
    <text evidence="1">Present with 1360 molecules/cell in log phase SD medium.</text>
</comment>
<comment type="similarity">
    <text evidence="3">Belongs to the uroporphyrinogen-III synthase family.</text>
</comment>
<comment type="caution">
    <text evidence="4">Was originally thought to be involved in mitochondrial import.</text>
</comment>
<evidence type="ECO:0000269" key="1">
    <source>
    </source>
</evidence>
<evidence type="ECO:0000303" key="2">
    <source>
    </source>
</evidence>
<evidence type="ECO:0000305" key="3"/>
<evidence type="ECO:0000305" key="4">
    <source>
    </source>
</evidence>
<evidence type="ECO:0000305" key="5">
    <source>
    </source>
</evidence>
<protein>
    <recommendedName>
        <fullName evidence="3">Uroporphyrinogen-III synthase</fullName>
        <shortName>UROIIIS</shortName>
        <shortName>UROS</shortName>
        <ecNumber evidence="5">4.2.1.75</ecNumber>
    </recommendedName>
    <alternativeName>
        <fullName>Hydroxymethylbilane hydrolyase [cyclizing]</fullName>
    </alternativeName>
    <alternativeName>
        <fullName>Uroporphyrinogen-III cosynthase</fullName>
    </alternativeName>
</protein>
<feature type="chain" id="PRO_0000135254" description="Uroporphyrinogen-III synthase">
    <location>
        <begin position="1"/>
        <end position="275"/>
    </location>
</feature>
<feature type="sequence conflict" description="In Ref. 1; CAA28399." evidence="3" ref="1">
    <original>HLRVASIGPTTKKYLDDNDVTSDVVSPKPDPKSLLDAIELYQRHK</original>
    <variation>IYGLRHRTYH</variation>
    <location>
        <begin position="231"/>
        <end position="275"/>
    </location>
</feature>
<sequence>MSSRKKVRVLLLKNKTVPIDKYELECRSKAFEPIFVPLIKHTHVIQDFRNVLNTIPNYLNTINYIIITSQRTVESLNEAIIPTLTSEQKAALLSKTVYTVGPATANFIRRSGFINVKGGEDAGNGSILADIIIDDLSTDIKACPPSELLFLVGEIRRDIIPKKLHSKGIKVREVVTYKTEELSDGFKRFIHAMKECDEDEVFSDWVVVFSPQGTKEITQYLGDSNRLPGSHLRVASIGPTTKKYLDDNDVTSDVVSPKPDPKSLLDAIELYQRHK</sequence>
<gene>
    <name evidence="2" type="primary">HEM4</name>
    <name type="synonym">ORF1</name>
    <name type="ordered locus">YOR278W</name>
    <name type="ORF">O5463</name>
</gene>
<reference key="1">
    <citation type="journal article" date="1986" name="Curr. Genet.">
        <title>Isolation of a nuclear yeast gene involved in the mitochondrial import of cytoplasmically synthesized precursor proteins.</title>
        <authorList>
            <person name="Langgut W."/>
            <person name="Entrup R."/>
            <person name="Schweizer E."/>
        </authorList>
    </citation>
    <scope>NUCLEOTIDE SEQUENCE [GENOMIC DNA]</scope>
    <source>
        <strain>ATCC 28383 / FL100 / VTT C-80102</strain>
    </source>
</reference>
<reference key="2">
    <citation type="journal article" date="1996" name="Yeast">
        <title>DNA sequence analysis of the VPH1-SNF2 region on chromosome XV of Saccharomyces cerevisiae.</title>
        <authorList>
            <person name="Cheret G."/>
            <person name="Bernardi A."/>
            <person name="Sor F.J."/>
        </authorList>
    </citation>
    <scope>NUCLEOTIDE SEQUENCE [GENOMIC DNA]</scope>
    <source>
        <strain>ATCC 204508 / S288c</strain>
    </source>
</reference>
<reference key="3">
    <citation type="journal article" date="1997" name="Nature">
        <title>The nucleotide sequence of Saccharomyces cerevisiae chromosome XV.</title>
        <authorList>
            <person name="Dujon B."/>
            <person name="Albermann K."/>
            <person name="Aldea M."/>
            <person name="Alexandraki D."/>
            <person name="Ansorge W."/>
            <person name="Arino J."/>
            <person name="Benes V."/>
            <person name="Bohn C."/>
            <person name="Bolotin-Fukuhara M."/>
            <person name="Bordonne R."/>
            <person name="Boyer J."/>
            <person name="Camasses A."/>
            <person name="Casamayor A."/>
            <person name="Casas C."/>
            <person name="Cheret G."/>
            <person name="Cziepluch C."/>
            <person name="Daignan-Fornier B."/>
            <person name="Dang V.-D."/>
            <person name="de Haan M."/>
            <person name="Delius H."/>
            <person name="Durand P."/>
            <person name="Fairhead C."/>
            <person name="Feldmann H."/>
            <person name="Gaillon L."/>
            <person name="Galisson F."/>
            <person name="Gamo F.-J."/>
            <person name="Gancedo C."/>
            <person name="Goffeau A."/>
            <person name="Goulding S.E."/>
            <person name="Grivell L.A."/>
            <person name="Habbig B."/>
            <person name="Hand N.J."/>
            <person name="Hani J."/>
            <person name="Hattenhorst U."/>
            <person name="Hebling U."/>
            <person name="Hernando Y."/>
            <person name="Herrero E."/>
            <person name="Heumann K."/>
            <person name="Hiesel R."/>
            <person name="Hilger F."/>
            <person name="Hofmann B."/>
            <person name="Hollenberg C.P."/>
            <person name="Hughes B."/>
            <person name="Jauniaux J.-C."/>
            <person name="Kalogeropoulos A."/>
            <person name="Katsoulou C."/>
            <person name="Kordes E."/>
            <person name="Lafuente M.J."/>
            <person name="Landt O."/>
            <person name="Louis E.J."/>
            <person name="Maarse A.C."/>
            <person name="Madania A."/>
            <person name="Mannhaupt G."/>
            <person name="Marck C."/>
            <person name="Martin R.P."/>
            <person name="Mewes H.-W."/>
            <person name="Michaux G."/>
            <person name="Paces V."/>
            <person name="Parle-McDermott A.G."/>
            <person name="Pearson B.M."/>
            <person name="Perrin A."/>
            <person name="Pettersson B."/>
            <person name="Poch O."/>
            <person name="Pohl T.M."/>
            <person name="Poirey R."/>
            <person name="Portetelle D."/>
            <person name="Pujol A."/>
            <person name="Purnelle B."/>
            <person name="Ramezani Rad M."/>
            <person name="Rechmann S."/>
            <person name="Schwager C."/>
            <person name="Schweizer M."/>
            <person name="Sor F."/>
            <person name="Sterky F."/>
            <person name="Tarassov I.A."/>
            <person name="Teodoru C."/>
            <person name="Tettelin H."/>
            <person name="Thierry A."/>
            <person name="Tobiasch E."/>
            <person name="Tzermia M."/>
            <person name="Uhlen M."/>
            <person name="Unseld M."/>
            <person name="Valens M."/>
            <person name="Vandenbol M."/>
            <person name="Vetter I."/>
            <person name="Vlcek C."/>
            <person name="Voet M."/>
            <person name="Volckaert G."/>
            <person name="Voss H."/>
            <person name="Wambutt R."/>
            <person name="Wedler H."/>
            <person name="Wiemann S."/>
            <person name="Winsor B."/>
            <person name="Wolfe K.H."/>
            <person name="Zollner A."/>
            <person name="Zumstein E."/>
            <person name="Kleine K."/>
        </authorList>
    </citation>
    <scope>NUCLEOTIDE SEQUENCE [LARGE SCALE GENOMIC DNA]</scope>
    <source>
        <strain>ATCC 204508 / S288c</strain>
    </source>
</reference>
<reference key="4">
    <citation type="journal article" date="2014" name="G3 (Bethesda)">
        <title>The reference genome sequence of Saccharomyces cerevisiae: Then and now.</title>
        <authorList>
            <person name="Engel S.R."/>
            <person name="Dietrich F.S."/>
            <person name="Fisk D.G."/>
            <person name="Binkley G."/>
            <person name="Balakrishnan R."/>
            <person name="Costanzo M.C."/>
            <person name="Dwight S.S."/>
            <person name="Hitz B.C."/>
            <person name="Karra K."/>
            <person name="Nash R.S."/>
            <person name="Weng S."/>
            <person name="Wong E.D."/>
            <person name="Lloyd P."/>
            <person name="Skrzypek M.S."/>
            <person name="Miyasato S.R."/>
            <person name="Simison M."/>
            <person name="Cherry J.M."/>
        </authorList>
    </citation>
    <scope>GENOME REANNOTATION</scope>
    <source>
        <strain>ATCC 204508 / S288c</strain>
    </source>
</reference>
<reference key="5">
    <citation type="journal article" date="1995" name="Yeast">
        <title>Isolation of the gene HEM4 encoding uroporphyrinogen III synthase in Saccharomyces cerevisiae.</title>
        <authorList>
            <person name="Amillet J.-M."/>
            <person name="Labbe-Bois R."/>
        </authorList>
    </citation>
    <scope>FUNCTION</scope>
    <scope>CATALYTIC ACTIVITY</scope>
    <scope>PATHWAY</scope>
</reference>
<reference key="6">
    <citation type="journal article" date="2003" name="Nature">
        <title>Global analysis of protein expression in yeast.</title>
        <authorList>
            <person name="Ghaemmaghami S."/>
            <person name="Huh W.-K."/>
            <person name="Bower K."/>
            <person name="Howson R.W."/>
            <person name="Belle A."/>
            <person name="Dephoure N."/>
            <person name="O'Shea E.K."/>
            <person name="Weissman J.S."/>
        </authorList>
    </citation>
    <scope>LEVEL OF PROTEIN EXPRESSION [LARGE SCALE ANALYSIS]</scope>
</reference>